<organism>
    <name type="scientific">Azobacteroides pseudotrichonymphae genomovar. CFP2</name>
    <dbReference type="NCBI Taxonomy" id="511995"/>
    <lineage>
        <taxon>Bacteria</taxon>
        <taxon>Pseudomonadati</taxon>
        <taxon>Bacteroidota</taxon>
        <taxon>Bacteroidia</taxon>
        <taxon>Bacteroidales</taxon>
        <taxon>Candidatus Azobacteroides</taxon>
    </lineage>
</organism>
<reference key="1">
    <citation type="journal article" date="2008" name="Science">
        <title>Genome of an endosymbiont coupling N2 fixation to cellulolysis within RT protist cells in termite gut.</title>
        <authorList>
            <person name="Hongoh Y."/>
            <person name="Sharma V.K."/>
            <person name="Prakash T."/>
            <person name="Noda S."/>
            <person name="Toh H."/>
            <person name="Taylor T.D."/>
            <person name="Kudo T."/>
            <person name="Sakaki Y."/>
            <person name="Toyoda A."/>
            <person name="Hattori M."/>
            <person name="Ohkuma M."/>
        </authorList>
    </citation>
    <scope>NUCLEOTIDE SEQUENCE [LARGE SCALE GENOMIC DNA]</scope>
</reference>
<protein>
    <recommendedName>
        <fullName evidence="1">Protein translocase subunit SecA</fullName>
        <ecNumber evidence="1">7.4.2.8</ecNumber>
    </recommendedName>
</protein>
<sequence length="1119" mass="129811">MNFSNILSNFFGNKSQRDLNEISPFVQKTLTIYSSVENLSNDELRGRTRELMILLQKEIEMEKNKIDELKILVESLELEDRETVWNEIDEIEKDIIEKQERILDKILPEVFAIVKDTARRFAENETIEVTATDFDRQLAVFYDFVSIQNDKAIYQNHWFAGGNEIIWNMIHYNVQLFGGIVLHNCNPKKYIKDIEGHNFSKKIKGYIAEMATGEGKTLAATLPVFLNAMTHNGVHVVTINDYLSKRDSEWMGPLYMFHGLSVDCIDKHRPNSNERRKAYEADITFGTNSEFGFDYLRDNMAVNPQDLVQRKHNYAIIDEVDSVLIDDARTPLIISGPVAKEDDQLYVLYRSRVENLVNVQKKLTNNLLIEAKKLMALEDPKQHEEGLKLLFRSYKGMPKNKALIKYLSEPGIKMSMLKTEEFYMQQQNREMYIITDELYFVIDEKNRSVELTDRGIDILTGNSDDPEFFVLPDLGTKFAEIENELITKEEKQLKKDELMQSYAAKSERVHTINQLLKAYCLFEKDDAYVVLDNRVMIVDEQTGRIMEGRRYSDGLHQAIEAKEHVKIEAATQTFATITLQNYFRMYRKLAGMTGTAETEAGEFWDIYKLDVVVIPTNQLVIRNDKDDRLYKTAREKYAAIINEIITLREHGRPVLVGTTSVEISELLSRMLNMRKIHHNVLNAKLHQKEAEIVAQAGQTGTVTIATNMAGRGTDIKLSTKARDAGGLAIIGTERHDSRRIDRQLRGRSGRQGDPGSSVFFISLEDDLMRLFASERIAKMMDKMGFKEGEVLEAKMLNNAVERAQKKVEENNFGIRKRLLEYDDVMNSQREVIYKRRHHALIGERIGLDIINMIYDVVNSIVEQYSNFNDYKGLKSELYKTLAIEPPISEEEFKNMKTTHLTEVIFNTSIVNFKWKNEQIVQIVQPRIERAYKEVGNKYQNIIVPITDGRKIYNVSYHLKTVHDTKSREIIKSFEKAVLLSSIDEAWREHLREMDELHNSVQNASYENKDPLLIYKLESFNLFKNMIDTMNKRVISILMRGQIYIKNQEVREATPEKKTNYNHYKVRKDELIESGRIQGRTAKRDTRILQKIEPIRVEKTVRRNDPCPCGSGKKYKNCCF</sequence>
<keyword id="KW-0067">ATP-binding</keyword>
<keyword id="KW-0997">Cell inner membrane</keyword>
<keyword id="KW-1003">Cell membrane</keyword>
<keyword id="KW-0963">Cytoplasm</keyword>
<keyword id="KW-0472">Membrane</keyword>
<keyword id="KW-0479">Metal-binding</keyword>
<keyword id="KW-0547">Nucleotide-binding</keyword>
<keyword id="KW-0653">Protein transport</keyword>
<keyword id="KW-1185">Reference proteome</keyword>
<keyword id="KW-1278">Translocase</keyword>
<keyword id="KW-0811">Translocation</keyword>
<keyword id="KW-0813">Transport</keyword>
<keyword id="KW-0862">Zinc</keyword>
<feature type="chain" id="PRO_1000144973" description="Protein translocase subunit SecA">
    <location>
        <begin position="1"/>
        <end position="1119"/>
    </location>
</feature>
<feature type="binding site" evidence="1">
    <location>
        <position position="175"/>
    </location>
    <ligand>
        <name>ATP</name>
        <dbReference type="ChEBI" id="CHEBI:30616"/>
    </ligand>
</feature>
<feature type="binding site" evidence="1">
    <location>
        <begin position="213"/>
        <end position="217"/>
    </location>
    <ligand>
        <name>ATP</name>
        <dbReference type="ChEBI" id="CHEBI:30616"/>
    </ligand>
</feature>
<feature type="binding site" evidence="1">
    <location>
        <position position="714"/>
    </location>
    <ligand>
        <name>ATP</name>
        <dbReference type="ChEBI" id="CHEBI:30616"/>
    </ligand>
</feature>
<feature type="binding site" evidence="1">
    <location>
        <position position="1106"/>
    </location>
    <ligand>
        <name>Zn(2+)</name>
        <dbReference type="ChEBI" id="CHEBI:29105"/>
    </ligand>
</feature>
<feature type="binding site" evidence="1">
    <location>
        <position position="1108"/>
    </location>
    <ligand>
        <name>Zn(2+)</name>
        <dbReference type="ChEBI" id="CHEBI:29105"/>
    </ligand>
</feature>
<feature type="binding site" evidence="1">
    <location>
        <position position="1117"/>
    </location>
    <ligand>
        <name>Zn(2+)</name>
        <dbReference type="ChEBI" id="CHEBI:29105"/>
    </ligand>
</feature>
<feature type="binding site" evidence="1">
    <location>
        <position position="1118"/>
    </location>
    <ligand>
        <name>Zn(2+)</name>
        <dbReference type="ChEBI" id="CHEBI:29105"/>
    </ligand>
</feature>
<proteinExistence type="inferred from homology"/>
<accession>B6YQX8</accession>
<name>SECA_AZOPC</name>
<gene>
    <name evidence="1" type="primary">secA</name>
    <name type="ordered locus">CFPG_337</name>
</gene>
<evidence type="ECO:0000255" key="1">
    <source>
        <dbReference type="HAMAP-Rule" id="MF_01382"/>
    </source>
</evidence>
<dbReference type="EC" id="7.4.2.8" evidence="1"/>
<dbReference type="EMBL" id="AP010656">
    <property type="protein sequence ID" value="BAG83600.1"/>
    <property type="molecule type" value="Genomic_DNA"/>
</dbReference>
<dbReference type="RefSeq" id="WP_012573361.1">
    <property type="nucleotide sequence ID" value="NC_011565.1"/>
</dbReference>
<dbReference type="SMR" id="B6YQX8"/>
<dbReference type="STRING" id="511995.CFPG_337"/>
<dbReference type="KEGG" id="aps:CFPG_337"/>
<dbReference type="eggNOG" id="COG0653">
    <property type="taxonomic scope" value="Bacteria"/>
</dbReference>
<dbReference type="HOGENOM" id="CLU_005314_3_0_10"/>
<dbReference type="OrthoDB" id="9805579at2"/>
<dbReference type="Proteomes" id="UP000000723">
    <property type="component" value="Chromosome"/>
</dbReference>
<dbReference type="GO" id="GO:0031522">
    <property type="term" value="C:cell envelope Sec protein transport complex"/>
    <property type="evidence" value="ECO:0007669"/>
    <property type="project" value="TreeGrafter"/>
</dbReference>
<dbReference type="GO" id="GO:0005829">
    <property type="term" value="C:cytosol"/>
    <property type="evidence" value="ECO:0007669"/>
    <property type="project" value="TreeGrafter"/>
</dbReference>
<dbReference type="GO" id="GO:0005886">
    <property type="term" value="C:plasma membrane"/>
    <property type="evidence" value="ECO:0007669"/>
    <property type="project" value="UniProtKB-SubCell"/>
</dbReference>
<dbReference type="GO" id="GO:0005524">
    <property type="term" value="F:ATP binding"/>
    <property type="evidence" value="ECO:0007669"/>
    <property type="project" value="UniProtKB-UniRule"/>
</dbReference>
<dbReference type="GO" id="GO:0046872">
    <property type="term" value="F:metal ion binding"/>
    <property type="evidence" value="ECO:0007669"/>
    <property type="project" value="UniProtKB-KW"/>
</dbReference>
<dbReference type="GO" id="GO:0008564">
    <property type="term" value="F:protein-exporting ATPase activity"/>
    <property type="evidence" value="ECO:0007669"/>
    <property type="project" value="UniProtKB-EC"/>
</dbReference>
<dbReference type="GO" id="GO:0065002">
    <property type="term" value="P:intracellular protein transmembrane transport"/>
    <property type="evidence" value="ECO:0007669"/>
    <property type="project" value="UniProtKB-UniRule"/>
</dbReference>
<dbReference type="GO" id="GO:0017038">
    <property type="term" value="P:protein import"/>
    <property type="evidence" value="ECO:0007669"/>
    <property type="project" value="InterPro"/>
</dbReference>
<dbReference type="GO" id="GO:0006605">
    <property type="term" value="P:protein targeting"/>
    <property type="evidence" value="ECO:0007669"/>
    <property type="project" value="UniProtKB-UniRule"/>
</dbReference>
<dbReference type="GO" id="GO:0043952">
    <property type="term" value="P:protein transport by the Sec complex"/>
    <property type="evidence" value="ECO:0007669"/>
    <property type="project" value="TreeGrafter"/>
</dbReference>
<dbReference type="CDD" id="cd17928">
    <property type="entry name" value="DEXDc_SecA"/>
    <property type="match status" value="1"/>
</dbReference>
<dbReference type="CDD" id="cd18803">
    <property type="entry name" value="SF2_C_secA"/>
    <property type="match status" value="1"/>
</dbReference>
<dbReference type="FunFam" id="3.40.50.300:FF:000246">
    <property type="entry name" value="Preprotein translocase subunit SecA"/>
    <property type="match status" value="1"/>
</dbReference>
<dbReference type="FunFam" id="3.40.50.300:FF:000694">
    <property type="entry name" value="Preprotein translocase subunit SecA"/>
    <property type="match status" value="1"/>
</dbReference>
<dbReference type="Gene3D" id="1.10.3060.10">
    <property type="entry name" value="Helical scaffold and wing domains of SecA"/>
    <property type="match status" value="1"/>
</dbReference>
<dbReference type="Gene3D" id="3.40.50.300">
    <property type="entry name" value="P-loop containing nucleotide triphosphate hydrolases"/>
    <property type="match status" value="2"/>
</dbReference>
<dbReference type="Gene3D" id="3.90.1440.10">
    <property type="entry name" value="SecA, preprotein cross-linking domain"/>
    <property type="match status" value="1"/>
</dbReference>
<dbReference type="HAMAP" id="MF_01382">
    <property type="entry name" value="SecA"/>
    <property type="match status" value="1"/>
</dbReference>
<dbReference type="InterPro" id="IPR014001">
    <property type="entry name" value="Helicase_ATP-bd"/>
</dbReference>
<dbReference type="InterPro" id="IPR001650">
    <property type="entry name" value="Helicase_C-like"/>
</dbReference>
<dbReference type="InterPro" id="IPR027417">
    <property type="entry name" value="P-loop_NTPase"/>
</dbReference>
<dbReference type="InterPro" id="IPR004027">
    <property type="entry name" value="SEC_C_motif"/>
</dbReference>
<dbReference type="InterPro" id="IPR000185">
    <property type="entry name" value="SecA"/>
</dbReference>
<dbReference type="InterPro" id="IPR020937">
    <property type="entry name" value="SecA_CS"/>
</dbReference>
<dbReference type="InterPro" id="IPR011115">
    <property type="entry name" value="SecA_DEAD"/>
</dbReference>
<dbReference type="InterPro" id="IPR014018">
    <property type="entry name" value="SecA_motor_DEAD"/>
</dbReference>
<dbReference type="InterPro" id="IPR011130">
    <property type="entry name" value="SecA_preprotein_X-link_dom"/>
</dbReference>
<dbReference type="InterPro" id="IPR044722">
    <property type="entry name" value="SecA_SF2_C"/>
</dbReference>
<dbReference type="InterPro" id="IPR011116">
    <property type="entry name" value="SecA_Wing/Scaffold"/>
</dbReference>
<dbReference type="InterPro" id="IPR036266">
    <property type="entry name" value="SecA_Wing/Scaffold_sf"/>
</dbReference>
<dbReference type="InterPro" id="IPR036670">
    <property type="entry name" value="SecA_X-link_sf"/>
</dbReference>
<dbReference type="NCBIfam" id="NF009536">
    <property type="entry name" value="PRK12901.1"/>
    <property type="match status" value="1"/>
</dbReference>
<dbReference type="PANTHER" id="PTHR30612:SF0">
    <property type="entry name" value="CHLOROPLAST PROTEIN-TRANSPORTING ATPASE"/>
    <property type="match status" value="1"/>
</dbReference>
<dbReference type="PANTHER" id="PTHR30612">
    <property type="entry name" value="SECA INNER MEMBRANE COMPONENT OF SEC PROTEIN SECRETION SYSTEM"/>
    <property type="match status" value="1"/>
</dbReference>
<dbReference type="Pfam" id="PF21090">
    <property type="entry name" value="P-loop_SecA"/>
    <property type="match status" value="1"/>
</dbReference>
<dbReference type="Pfam" id="PF02810">
    <property type="entry name" value="SEC-C"/>
    <property type="match status" value="1"/>
</dbReference>
<dbReference type="Pfam" id="PF07517">
    <property type="entry name" value="SecA_DEAD"/>
    <property type="match status" value="1"/>
</dbReference>
<dbReference type="Pfam" id="PF01043">
    <property type="entry name" value="SecA_PP_bind"/>
    <property type="match status" value="1"/>
</dbReference>
<dbReference type="Pfam" id="PF07516">
    <property type="entry name" value="SecA_SW"/>
    <property type="match status" value="1"/>
</dbReference>
<dbReference type="SMART" id="SM00957">
    <property type="entry name" value="SecA_DEAD"/>
    <property type="match status" value="1"/>
</dbReference>
<dbReference type="SMART" id="SM00958">
    <property type="entry name" value="SecA_PP_bind"/>
    <property type="match status" value="1"/>
</dbReference>
<dbReference type="SUPFAM" id="SSF81886">
    <property type="entry name" value="Helical scaffold and wing domains of SecA"/>
    <property type="match status" value="1"/>
</dbReference>
<dbReference type="SUPFAM" id="SSF52540">
    <property type="entry name" value="P-loop containing nucleoside triphosphate hydrolases"/>
    <property type="match status" value="2"/>
</dbReference>
<dbReference type="SUPFAM" id="SSF81767">
    <property type="entry name" value="Pre-protein crosslinking domain of SecA"/>
    <property type="match status" value="1"/>
</dbReference>
<dbReference type="PROSITE" id="PS01312">
    <property type="entry name" value="SECA"/>
    <property type="match status" value="1"/>
</dbReference>
<dbReference type="PROSITE" id="PS51196">
    <property type="entry name" value="SECA_MOTOR_DEAD"/>
    <property type="match status" value="1"/>
</dbReference>
<comment type="function">
    <text evidence="1">Part of the Sec protein translocase complex. Interacts with the SecYEG preprotein conducting channel. Has a central role in coupling the hydrolysis of ATP to the transfer of proteins into and across the cell membrane, serving as an ATP-driven molecular motor driving the stepwise translocation of polypeptide chains across the membrane.</text>
</comment>
<comment type="catalytic activity">
    <reaction evidence="1">
        <text>ATP + H2O + cellular proteinSide 1 = ADP + phosphate + cellular proteinSide 2.</text>
        <dbReference type="EC" id="7.4.2.8"/>
    </reaction>
</comment>
<comment type="cofactor">
    <cofactor evidence="1">
        <name>Zn(2+)</name>
        <dbReference type="ChEBI" id="CHEBI:29105"/>
    </cofactor>
    <text evidence="1">May bind 1 zinc ion per subunit.</text>
</comment>
<comment type="subunit">
    <text evidence="1">Monomer and homodimer. Part of the essential Sec protein translocation apparatus which comprises SecA, SecYEG and auxiliary proteins SecDF. Other proteins may also be involved.</text>
</comment>
<comment type="subcellular location">
    <subcellularLocation>
        <location evidence="1">Cell inner membrane</location>
        <topology evidence="1">Peripheral membrane protein</topology>
        <orientation evidence="1">Cytoplasmic side</orientation>
    </subcellularLocation>
    <subcellularLocation>
        <location evidence="1">Cytoplasm</location>
    </subcellularLocation>
    <text evidence="1">Distribution is 50-50.</text>
</comment>
<comment type="similarity">
    <text evidence="1">Belongs to the SecA family.</text>
</comment>